<sequence>MKQYLELMQKVLDEGTQKNDRTGTGTLSIFGHQMRFNLQDGFPLVTTKRCHLRSIIHELLWFLQGDTNIAYLHENNVTIWDEWADENGDLGPVYGKQWRAWPTPDGRHIDQITTVLNQLKNDPDSRRIIVSAWNVGELDKMALAPCHAFFQFYVADGKLSCQLYQRSCDVFLGLPFNIASYALLVHMMAQQCDLEVGDFVWTGGDTHLYSNHMDQTHLQLSREPRPLPKLIIKRKPESIFDYRFEDFEIEGYDPHPGIKAPVAI</sequence>
<protein>
    <recommendedName>
        <fullName evidence="1">Thymidylate synthase</fullName>
        <shortName evidence="1">TS</shortName>
        <shortName evidence="1">TSase</shortName>
        <ecNumber evidence="1">2.1.1.45</ecNumber>
    </recommendedName>
</protein>
<organism>
    <name type="scientific">Escherichia coli O139:H28 (strain E24377A / ETEC)</name>
    <dbReference type="NCBI Taxonomy" id="331111"/>
    <lineage>
        <taxon>Bacteria</taxon>
        <taxon>Pseudomonadati</taxon>
        <taxon>Pseudomonadota</taxon>
        <taxon>Gammaproteobacteria</taxon>
        <taxon>Enterobacterales</taxon>
        <taxon>Enterobacteriaceae</taxon>
        <taxon>Escherichia</taxon>
    </lineage>
</organism>
<feature type="chain" id="PRO_1000057059" description="Thymidylate synthase">
    <location>
        <begin position="1"/>
        <end position="264"/>
    </location>
</feature>
<feature type="active site" description="Nucleophile" evidence="1">
    <location>
        <position position="146"/>
    </location>
</feature>
<feature type="binding site" description="in other chain" evidence="1">
    <location>
        <position position="21"/>
    </location>
    <ligand>
        <name>dUMP</name>
        <dbReference type="ChEBI" id="CHEBI:246422"/>
        <note>ligand shared between dimeric partners</note>
    </ligand>
</feature>
<feature type="binding site" evidence="1">
    <location>
        <position position="51"/>
    </location>
    <ligand>
        <name>(6R)-5,10-methylene-5,6,7,8-tetrahydrofolate</name>
        <dbReference type="ChEBI" id="CHEBI:15636"/>
    </ligand>
</feature>
<feature type="binding site" evidence="1">
    <location>
        <begin position="126"/>
        <end position="127"/>
    </location>
    <ligand>
        <name>dUMP</name>
        <dbReference type="ChEBI" id="CHEBI:246422"/>
        <note>ligand shared between dimeric partners</note>
    </ligand>
</feature>
<feature type="binding site" description="in other chain" evidence="1">
    <location>
        <begin position="166"/>
        <end position="169"/>
    </location>
    <ligand>
        <name>dUMP</name>
        <dbReference type="ChEBI" id="CHEBI:246422"/>
        <note>ligand shared between dimeric partners</note>
    </ligand>
</feature>
<feature type="binding site" evidence="1">
    <location>
        <position position="169"/>
    </location>
    <ligand>
        <name>(6R)-5,10-methylene-5,6,7,8-tetrahydrofolate</name>
        <dbReference type="ChEBI" id="CHEBI:15636"/>
    </ligand>
</feature>
<feature type="binding site" description="in other chain" evidence="1">
    <location>
        <position position="177"/>
    </location>
    <ligand>
        <name>dUMP</name>
        <dbReference type="ChEBI" id="CHEBI:246422"/>
        <note>ligand shared between dimeric partners</note>
    </ligand>
</feature>
<feature type="binding site" description="in other chain" evidence="1">
    <location>
        <begin position="207"/>
        <end position="209"/>
    </location>
    <ligand>
        <name>dUMP</name>
        <dbReference type="ChEBI" id="CHEBI:246422"/>
        <note>ligand shared between dimeric partners</note>
    </ligand>
</feature>
<feature type="binding site" evidence="1">
    <location>
        <position position="263"/>
    </location>
    <ligand>
        <name>(6R)-5,10-methylene-5,6,7,8-tetrahydrofolate</name>
        <dbReference type="ChEBI" id="CHEBI:15636"/>
    </ligand>
</feature>
<proteinExistence type="inferred from homology"/>
<keyword id="KW-0963">Cytoplasm</keyword>
<keyword id="KW-0489">Methyltransferase</keyword>
<keyword id="KW-0545">Nucleotide biosynthesis</keyword>
<keyword id="KW-1185">Reference proteome</keyword>
<keyword id="KW-0808">Transferase</keyword>
<comment type="function">
    <text evidence="1">Catalyzes the reductive methylation of 2'-deoxyuridine-5'-monophosphate (dUMP) to 2'-deoxythymidine-5'-monophosphate (dTMP) while utilizing 5,10-methylenetetrahydrofolate (mTHF) as the methyl donor and reductant in the reaction, yielding dihydrofolate (DHF) as a by-product. This enzymatic reaction provides an intracellular de novo source of dTMP, an essential precursor for DNA biosynthesis.</text>
</comment>
<comment type="catalytic activity">
    <reaction evidence="1">
        <text>dUMP + (6R)-5,10-methylene-5,6,7,8-tetrahydrofolate = 7,8-dihydrofolate + dTMP</text>
        <dbReference type="Rhea" id="RHEA:12104"/>
        <dbReference type="ChEBI" id="CHEBI:15636"/>
        <dbReference type="ChEBI" id="CHEBI:57451"/>
        <dbReference type="ChEBI" id="CHEBI:63528"/>
        <dbReference type="ChEBI" id="CHEBI:246422"/>
        <dbReference type="EC" id="2.1.1.45"/>
    </reaction>
</comment>
<comment type="pathway">
    <text evidence="1">Pyrimidine metabolism; dTTP biosynthesis.</text>
</comment>
<comment type="subunit">
    <text evidence="1">Homodimer.</text>
</comment>
<comment type="subcellular location">
    <subcellularLocation>
        <location evidence="1">Cytoplasm</location>
    </subcellularLocation>
</comment>
<comment type="similarity">
    <text evidence="1">Belongs to the thymidylate synthase family. Bacterial-type ThyA subfamily.</text>
</comment>
<gene>
    <name evidence="1" type="primary">thyA</name>
    <name type="ordered locus">EcE24377A_3147</name>
</gene>
<reference key="1">
    <citation type="journal article" date="2008" name="J. Bacteriol.">
        <title>The pangenome structure of Escherichia coli: comparative genomic analysis of E. coli commensal and pathogenic isolates.</title>
        <authorList>
            <person name="Rasko D.A."/>
            <person name="Rosovitz M.J."/>
            <person name="Myers G.S.A."/>
            <person name="Mongodin E.F."/>
            <person name="Fricke W.F."/>
            <person name="Gajer P."/>
            <person name="Crabtree J."/>
            <person name="Sebaihia M."/>
            <person name="Thomson N.R."/>
            <person name="Chaudhuri R."/>
            <person name="Henderson I.R."/>
            <person name="Sperandio V."/>
            <person name="Ravel J."/>
        </authorList>
    </citation>
    <scope>NUCLEOTIDE SEQUENCE [LARGE SCALE GENOMIC DNA]</scope>
    <source>
        <strain>E24377A / ETEC</strain>
    </source>
</reference>
<accession>A7ZQT3</accession>
<dbReference type="EC" id="2.1.1.45" evidence="1"/>
<dbReference type="EMBL" id="CP000800">
    <property type="protein sequence ID" value="ABV17804.1"/>
    <property type="molecule type" value="Genomic_DNA"/>
</dbReference>
<dbReference type="RefSeq" id="WP_000816232.1">
    <property type="nucleotide sequence ID" value="NC_009801.1"/>
</dbReference>
<dbReference type="BMRB" id="A7ZQT3"/>
<dbReference type="SMR" id="A7ZQT3"/>
<dbReference type="GeneID" id="93779171"/>
<dbReference type="KEGG" id="ecw:EcE24377A_3147"/>
<dbReference type="HOGENOM" id="CLU_021669_0_0_6"/>
<dbReference type="UniPathway" id="UPA00575"/>
<dbReference type="Proteomes" id="UP000001122">
    <property type="component" value="Chromosome"/>
</dbReference>
<dbReference type="GO" id="GO:0005829">
    <property type="term" value="C:cytosol"/>
    <property type="evidence" value="ECO:0007669"/>
    <property type="project" value="TreeGrafter"/>
</dbReference>
<dbReference type="GO" id="GO:0004799">
    <property type="term" value="F:thymidylate synthase activity"/>
    <property type="evidence" value="ECO:0007669"/>
    <property type="project" value="UniProtKB-UniRule"/>
</dbReference>
<dbReference type="GO" id="GO:0006231">
    <property type="term" value="P:dTMP biosynthetic process"/>
    <property type="evidence" value="ECO:0007669"/>
    <property type="project" value="UniProtKB-UniRule"/>
</dbReference>
<dbReference type="GO" id="GO:0006235">
    <property type="term" value="P:dTTP biosynthetic process"/>
    <property type="evidence" value="ECO:0007669"/>
    <property type="project" value="UniProtKB-UniRule"/>
</dbReference>
<dbReference type="GO" id="GO:0032259">
    <property type="term" value="P:methylation"/>
    <property type="evidence" value="ECO:0007669"/>
    <property type="project" value="UniProtKB-KW"/>
</dbReference>
<dbReference type="CDD" id="cd00351">
    <property type="entry name" value="TS_Pyrimidine_HMase"/>
    <property type="match status" value="1"/>
</dbReference>
<dbReference type="FunFam" id="3.30.572.10:FF:000001">
    <property type="entry name" value="Thymidylate synthase"/>
    <property type="match status" value="1"/>
</dbReference>
<dbReference type="Gene3D" id="3.30.572.10">
    <property type="entry name" value="Thymidylate synthase/dCMP hydroxymethylase domain"/>
    <property type="match status" value="1"/>
</dbReference>
<dbReference type="HAMAP" id="MF_00008">
    <property type="entry name" value="Thymidy_synth_bact"/>
    <property type="match status" value="1"/>
</dbReference>
<dbReference type="InterPro" id="IPR045097">
    <property type="entry name" value="Thymidate_synth/dCMP_Mease"/>
</dbReference>
<dbReference type="InterPro" id="IPR023451">
    <property type="entry name" value="Thymidate_synth/dCMP_Mease_dom"/>
</dbReference>
<dbReference type="InterPro" id="IPR036926">
    <property type="entry name" value="Thymidate_synth/dCMP_Mease_sf"/>
</dbReference>
<dbReference type="InterPro" id="IPR000398">
    <property type="entry name" value="Thymidylate_synthase"/>
</dbReference>
<dbReference type="InterPro" id="IPR020940">
    <property type="entry name" value="Thymidylate_synthase_AS"/>
</dbReference>
<dbReference type="NCBIfam" id="NF002497">
    <property type="entry name" value="PRK01827.1-3"/>
    <property type="match status" value="1"/>
</dbReference>
<dbReference type="NCBIfam" id="NF002499">
    <property type="entry name" value="PRK01827.1-5"/>
    <property type="match status" value="1"/>
</dbReference>
<dbReference type="NCBIfam" id="TIGR03284">
    <property type="entry name" value="thym_sym"/>
    <property type="match status" value="2"/>
</dbReference>
<dbReference type="PANTHER" id="PTHR11548:SF9">
    <property type="entry name" value="THYMIDYLATE SYNTHASE"/>
    <property type="match status" value="1"/>
</dbReference>
<dbReference type="PANTHER" id="PTHR11548">
    <property type="entry name" value="THYMIDYLATE SYNTHASE 1"/>
    <property type="match status" value="1"/>
</dbReference>
<dbReference type="Pfam" id="PF00303">
    <property type="entry name" value="Thymidylat_synt"/>
    <property type="match status" value="1"/>
</dbReference>
<dbReference type="PRINTS" id="PR00108">
    <property type="entry name" value="THYMDSNTHASE"/>
</dbReference>
<dbReference type="SUPFAM" id="SSF55831">
    <property type="entry name" value="Thymidylate synthase/dCMP hydroxymethylase"/>
    <property type="match status" value="1"/>
</dbReference>
<dbReference type="PROSITE" id="PS00091">
    <property type="entry name" value="THYMIDYLATE_SYNTHASE"/>
    <property type="match status" value="1"/>
</dbReference>
<evidence type="ECO:0000255" key="1">
    <source>
        <dbReference type="HAMAP-Rule" id="MF_00008"/>
    </source>
</evidence>
<name>TYSY_ECO24</name>